<proteinExistence type="inferred from homology"/>
<reference key="1">
    <citation type="submission" date="2008-12" db="EMBL/GenBank/DDBJ databases">
        <title>Complete sequence of chromosome of Shewanella baltica OS223.</title>
        <authorList>
            <consortium name="US DOE Joint Genome Institute"/>
            <person name="Lucas S."/>
            <person name="Copeland A."/>
            <person name="Lapidus A."/>
            <person name="Glavina del Rio T."/>
            <person name="Dalin E."/>
            <person name="Tice H."/>
            <person name="Bruce D."/>
            <person name="Goodwin L."/>
            <person name="Pitluck S."/>
            <person name="Chertkov O."/>
            <person name="Meincke L."/>
            <person name="Brettin T."/>
            <person name="Detter J.C."/>
            <person name="Han C."/>
            <person name="Kuske C.R."/>
            <person name="Larimer F."/>
            <person name="Land M."/>
            <person name="Hauser L."/>
            <person name="Kyrpides N."/>
            <person name="Ovchinnikova G."/>
            <person name="Brettar I."/>
            <person name="Rodrigues J."/>
            <person name="Konstantinidis K."/>
            <person name="Tiedje J."/>
        </authorList>
    </citation>
    <scope>NUCLEOTIDE SEQUENCE [LARGE SCALE GENOMIC DNA]</scope>
    <source>
        <strain>OS223</strain>
    </source>
</reference>
<gene>
    <name evidence="1" type="primary">aroQ</name>
    <name type="ordered locus">Sbal223_3798</name>
</gene>
<sequence>MSHKILLVNGPNLNLLGRREPSVYGHQTLADIVAELNQQAKLAEVELEHIQSNAEFELINAIHATDAQMIIINPAAFTHTSVALRDALLGVAIPFFEVHLSNVHAREAFRHHSYFSDKAIGVICGFGSQGYEFALAAAIKRLNQPQ</sequence>
<comment type="function">
    <text evidence="1">Catalyzes a trans-dehydration via an enolate intermediate.</text>
</comment>
<comment type="catalytic activity">
    <reaction evidence="1">
        <text>3-dehydroquinate = 3-dehydroshikimate + H2O</text>
        <dbReference type="Rhea" id="RHEA:21096"/>
        <dbReference type="ChEBI" id="CHEBI:15377"/>
        <dbReference type="ChEBI" id="CHEBI:16630"/>
        <dbReference type="ChEBI" id="CHEBI:32364"/>
        <dbReference type="EC" id="4.2.1.10"/>
    </reaction>
</comment>
<comment type="pathway">
    <text evidence="1">Metabolic intermediate biosynthesis; chorismate biosynthesis; chorismate from D-erythrose 4-phosphate and phosphoenolpyruvate: step 3/7.</text>
</comment>
<comment type="subunit">
    <text evidence="1">Homododecamer.</text>
</comment>
<comment type="similarity">
    <text evidence="1">Belongs to the type-II 3-dehydroquinase family.</text>
</comment>
<name>AROQ_SHEB2</name>
<feature type="chain" id="PRO_1000123698" description="3-dehydroquinate dehydratase">
    <location>
        <begin position="1"/>
        <end position="146"/>
    </location>
</feature>
<feature type="active site" description="Proton acceptor" evidence="1">
    <location>
        <position position="24"/>
    </location>
</feature>
<feature type="active site" description="Proton donor" evidence="1">
    <location>
        <position position="99"/>
    </location>
</feature>
<feature type="binding site" evidence="1">
    <location>
        <position position="73"/>
    </location>
    <ligand>
        <name>substrate</name>
    </ligand>
</feature>
<feature type="binding site" evidence="1">
    <location>
        <position position="79"/>
    </location>
    <ligand>
        <name>substrate</name>
    </ligand>
</feature>
<feature type="binding site" evidence="1">
    <location>
        <position position="86"/>
    </location>
    <ligand>
        <name>substrate</name>
    </ligand>
</feature>
<feature type="binding site" evidence="1">
    <location>
        <begin position="100"/>
        <end position="101"/>
    </location>
    <ligand>
        <name>substrate</name>
    </ligand>
</feature>
<feature type="binding site" evidence="1">
    <location>
        <position position="110"/>
    </location>
    <ligand>
        <name>substrate</name>
    </ligand>
</feature>
<feature type="site" description="Transition state stabilizer" evidence="1">
    <location>
        <position position="19"/>
    </location>
</feature>
<organism>
    <name type="scientific">Shewanella baltica (strain OS223)</name>
    <dbReference type="NCBI Taxonomy" id="407976"/>
    <lineage>
        <taxon>Bacteria</taxon>
        <taxon>Pseudomonadati</taxon>
        <taxon>Pseudomonadota</taxon>
        <taxon>Gammaproteobacteria</taxon>
        <taxon>Alteromonadales</taxon>
        <taxon>Shewanellaceae</taxon>
        <taxon>Shewanella</taxon>
    </lineage>
</organism>
<keyword id="KW-0028">Amino-acid biosynthesis</keyword>
<keyword id="KW-0057">Aromatic amino acid biosynthesis</keyword>
<keyword id="KW-0456">Lyase</keyword>
<accession>B8ECJ0</accession>
<protein>
    <recommendedName>
        <fullName evidence="1">3-dehydroquinate dehydratase</fullName>
        <shortName evidence="1">3-dehydroquinase</shortName>
        <ecNumber evidence="1">4.2.1.10</ecNumber>
    </recommendedName>
    <alternativeName>
        <fullName evidence="1">Type II DHQase</fullName>
    </alternativeName>
</protein>
<dbReference type="EC" id="4.2.1.10" evidence="1"/>
<dbReference type="EMBL" id="CP001252">
    <property type="protein sequence ID" value="ACK48275.1"/>
    <property type="molecule type" value="Genomic_DNA"/>
</dbReference>
<dbReference type="RefSeq" id="WP_006084274.1">
    <property type="nucleotide sequence ID" value="NC_011663.1"/>
</dbReference>
<dbReference type="SMR" id="B8ECJ0"/>
<dbReference type="KEGG" id="sbp:Sbal223_3798"/>
<dbReference type="HOGENOM" id="CLU_090968_1_0_6"/>
<dbReference type="UniPathway" id="UPA00053">
    <property type="reaction ID" value="UER00086"/>
</dbReference>
<dbReference type="Proteomes" id="UP000002507">
    <property type="component" value="Chromosome"/>
</dbReference>
<dbReference type="GO" id="GO:0003855">
    <property type="term" value="F:3-dehydroquinate dehydratase activity"/>
    <property type="evidence" value="ECO:0007669"/>
    <property type="project" value="UniProtKB-UniRule"/>
</dbReference>
<dbReference type="GO" id="GO:0008652">
    <property type="term" value="P:amino acid biosynthetic process"/>
    <property type="evidence" value="ECO:0007669"/>
    <property type="project" value="UniProtKB-KW"/>
</dbReference>
<dbReference type="GO" id="GO:0009073">
    <property type="term" value="P:aromatic amino acid family biosynthetic process"/>
    <property type="evidence" value="ECO:0007669"/>
    <property type="project" value="UniProtKB-KW"/>
</dbReference>
<dbReference type="GO" id="GO:0009423">
    <property type="term" value="P:chorismate biosynthetic process"/>
    <property type="evidence" value="ECO:0007669"/>
    <property type="project" value="UniProtKB-UniRule"/>
</dbReference>
<dbReference type="GO" id="GO:0019631">
    <property type="term" value="P:quinate catabolic process"/>
    <property type="evidence" value="ECO:0007669"/>
    <property type="project" value="TreeGrafter"/>
</dbReference>
<dbReference type="CDD" id="cd00466">
    <property type="entry name" value="DHQase_II"/>
    <property type="match status" value="1"/>
</dbReference>
<dbReference type="Gene3D" id="3.40.50.9100">
    <property type="entry name" value="Dehydroquinase, class II"/>
    <property type="match status" value="1"/>
</dbReference>
<dbReference type="HAMAP" id="MF_00169">
    <property type="entry name" value="AroQ"/>
    <property type="match status" value="1"/>
</dbReference>
<dbReference type="InterPro" id="IPR001874">
    <property type="entry name" value="DHquinase_II"/>
</dbReference>
<dbReference type="InterPro" id="IPR018509">
    <property type="entry name" value="DHquinase_II_CS"/>
</dbReference>
<dbReference type="InterPro" id="IPR036441">
    <property type="entry name" value="DHquinase_II_sf"/>
</dbReference>
<dbReference type="NCBIfam" id="TIGR01088">
    <property type="entry name" value="aroQ"/>
    <property type="match status" value="1"/>
</dbReference>
<dbReference type="NCBIfam" id="NF003804">
    <property type="entry name" value="PRK05395.1-1"/>
    <property type="match status" value="1"/>
</dbReference>
<dbReference type="NCBIfam" id="NF003805">
    <property type="entry name" value="PRK05395.1-2"/>
    <property type="match status" value="1"/>
</dbReference>
<dbReference type="NCBIfam" id="NF003806">
    <property type="entry name" value="PRK05395.1-3"/>
    <property type="match status" value="1"/>
</dbReference>
<dbReference type="NCBIfam" id="NF003807">
    <property type="entry name" value="PRK05395.1-4"/>
    <property type="match status" value="1"/>
</dbReference>
<dbReference type="PANTHER" id="PTHR21272">
    <property type="entry name" value="CATABOLIC 3-DEHYDROQUINASE"/>
    <property type="match status" value="1"/>
</dbReference>
<dbReference type="PANTHER" id="PTHR21272:SF3">
    <property type="entry name" value="CATABOLIC 3-DEHYDROQUINASE"/>
    <property type="match status" value="1"/>
</dbReference>
<dbReference type="Pfam" id="PF01220">
    <property type="entry name" value="DHquinase_II"/>
    <property type="match status" value="1"/>
</dbReference>
<dbReference type="PIRSF" id="PIRSF001399">
    <property type="entry name" value="DHquinase_II"/>
    <property type="match status" value="1"/>
</dbReference>
<dbReference type="SUPFAM" id="SSF52304">
    <property type="entry name" value="Type II 3-dehydroquinate dehydratase"/>
    <property type="match status" value="1"/>
</dbReference>
<dbReference type="PROSITE" id="PS01029">
    <property type="entry name" value="DEHYDROQUINASE_II"/>
    <property type="match status" value="1"/>
</dbReference>
<evidence type="ECO:0000255" key="1">
    <source>
        <dbReference type="HAMAP-Rule" id="MF_00169"/>
    </source>
</evidence>